<feature type="chain" id="PRO_1000095663" description="tRNA uridine 5-carboxymethylaminomethyl modification enzyme MnmG">
    <location>
        <begin position="1"/>
        <end position="629"/>
    </location>
</feature>
<feature type="binding site" evidence="1">
    <location>
        <begin position="13"/>
        <end position="18"/>
    </location>
    <ligand>
        <name>FAD</name>
        <dbReference type="ChEBI" id="CHEBI:57692"/>
    </ligand>
</feature>
<feature type="binding site" evidence="1">
    <location>
        <position position="125"/>
    </location>
    <ligand>
        <name>FAD</name>
        <dbReference type="ChEBI" id="CHEBI:57692"/>
    </ligand>
</feature>
<feature type="binding site" evidence="1">
    <location>
        <position position="180"/>
    </location>
    <ligand>
        <name>FAD</name>
        <dbReference type="ChEBI" id="CHEBI:57692"/>
    </ligand>
</feature>
<feature type="binding site" evidence="1">
    <location>
        <begin position="273"/>
        <end position="287"/>
    </location>
    <ligand>
        <name>NAD(+)</name>
        <dbReference type="ChEBI" id="CHEBI:57540"/>
    </ligand>
</feature>
<feature type="binding site" evidence="1">
    <location>
        <position position="370"/>
    </location>
    <ligand>
        <name>FAD</name>
        <dbReference type="ChEBI" id="CHEBI:57692"/>
    </ligand>
</feature>
<sequence>MFYQDPFDVIIIGGGHAGTEAAMAAARMGQQTLLLTHNIDTLGQMSCNPAIGGIGKGHLVKEVDALGGLMAKAIDQAGIQFRILNASKGPAVRATRAQADRVLYRQAVRTALENQPNLMIFQQAVEDLIVENDRVVGAVTQMGLKFRAKAVVLTVGTFLDGKIHIGLDNYSGGRAGDPPSIPLSRRLRELPLRVSRLKTGTPPRIDARTIDFSVLAQQHGDNPMPVFSFMGNASQHPQQVPCYITHTNEKTHDVIRNNLDRSPMYAGVIEGIGPRYCPSIEDKVMRFADRNQHQIFLEPEGLTSNEIYPNGISTSLPFDVQMQIVRSMQGMENAKIVRPGYAIEYDFFDPRDLKPTLESKFIHGLFFAGQINGTTGYEEAAAQGLLAGLNAARLSADKEGWAPARSQAYLGVLVDDLCTLGTKEPYRMFTSRAEYRLMLREDNADLRLTEMGRELGLVDDERWARFNEKLENIERERQRLKSTWVTPSAESADEVNAHLTTPLSREASGEDLLRRPEMTYAQLTSLAAFAPALEDEQAAEQVEIQVKYEGYIARQQDEIEKQLRNENTLLPATLDYRQVSGLSNEVIAKLNDHKPASIGQASRISGVTPAAISILLVWLKKQGMLRRSA</sequence>
<evidence type="ECO:0000255" key="1">
    <source>
        <dbReference type="HAMAP-Rule" id="MF_00129"/>
    </source>
</evidence>
<proteinExistence type="inferred from homology"/>
<keyword id="KW-0963">Cytoplasm</keyword>
<keyword id="KW-0274">FAD</keyword>
<keyword id="KW-0285">Flavoprotein</keyword>
<keyword id="KW-0520">NAD</keyword>
<keyword id="KW-0819">tRNA processing</keyword>
<dbReference type="EMBL" id="CP001120">
    <property type="protein sequence ID" value="ACF69398.1"/>
    <property type="molecule type" value="Genomic_DNA"/>
</dbReference>
<dbReference type="RefSeq" id="WP_000499872.1">
    <property type="nucleotide sequence ID" value="NC_011083.1"/>
</dbReference>
<dbReference type="SMR" id="B4TAY3"/>
<dbReference type="KEGG" id="seh:SeHA_C4207"/>
<dbReference type="HOGENOM" id="CLU_007831_2_2_6"/>
<dbReference type="Proteomes" id="UP000001866">
    <property type="component" value="Chromosome"/>
</dbReference>
<dbReference type="GO" id="GO:0005829">
    <property type="term" value="C:cytosol"/>
    <property type="evidence" value="ECO:0007669"/>
    <property type="project" value="TreeGrafter"/>
</dbReference>
<dbReference type="GO" id="GO:0050660">
    <property type="term" value="F:flavin adenine dinucleotide binding"/>
    <property type="evidence" value="ECO:0007669"/>
    <property type="project" value="UniProtKB-UniRule"/>
</dbReference>
<dbReference type="GO" id="GO:0030488">
    <property type="term" value="P:tRNA methylation"/>
    <property type="evidence" value="ECO:0007669"/>
    <property type="project" value="TreeGrafter"/>
</dbReference>
<dbReference type="GO" id="GO:0002098">
    <property type="term" value="P:tRNA wobble uridine modification"/>
    <property type="evidence" value="ECO:0007669"/>
    <property type="project" value="InterPro"/>
</dbReference>
<dbReference type="FunFam" id="1.10.10.1800:FF:000001">
    <property type="entry name" value="tRNA uridine 5-carboxymethylaminomethyl modification enzyme MnmG"/>
    <property type="match status" value="1"/>
</dbReference>
<dbReference type="FunFam" id="1.10.150.570:FF:000001">
    <property type="entry name" value="tRNA uridine 5-carboxymethylaminomethyl modification enzyme MnmG"/>
    <property type="match status" value="1"/>
</dbReference>
<dbReference type="FunFam" id="3.50.50.60:FF:000002">
    <property type="entry name" value="tRNA uridine 5-carboxymethylaminomethyl modification enzyme MnmG"/>
    <property type="match status" value="1"/>
</dbReference>
<dbReference type="FunFam" id="3.50.50.60:FF:000010">
    <property type="entry name" value="tRNA uridine 5-carboxymethylaminomethyl modification enzyme MnmG"/>
    <property type="match status" value="1"/>
</dbReference>
<dbReference type="Gene3D" id="3.50.50.60">
    <property type="entry name" value="FAD/NAD(P)-binding domain"/>
    <property type="match status" value="2"/>
</dbReference>
<dbReference type="Gene3D" id="1.10.150.570">
    <property type="entry name" value="GidA associated domain, C-terminal subdomain"/>
    <property type="match status" value="1"/>
</dbReference>
<dbReference type="Gene3D" id="1.10.10.1800">
    <property type="entry name" value="tRNA uridine 5-carboxymethylaminomethyl modification enzyme MnmG/GidA"/>
    <property type="match status" value="1"/>
</dbReference>
<dbReference type="HAMAP" id="MF_00129">
    <property type="entry name" value="MnmG_GidA"/>
    <property type="match status" value="1"/>
</dbReference>
<dbReference type="InterPro" id="IPR036188">
    <property type="entry name" value="FAD/NAD-bd_sf"/>
</dbReference>
<dbReference type="InterPro" id="IPR049312">
    <property type="entry name" value="GIDA_C_N"/>
</dbReference>
<dbReference type="InterPro" id="IPR004416">
    <property type="entry name" value="MnmG"/>
</dbReference>
<dbReference type="InterPro" id="IPR002218">
    <property type="entry name" value="MnmG-rel"/>
</dbReference>
<dbReference type="InterPro" id="IPR020595">
    <property type="entry name" value="MnmG-rel_CS"/>
</dbReference>
<dbReference type="InterPro" id="IPR026904">
    <property type="entry name" value="MnmG_C"/>
</dbReference>
<dbReference type="InterPro" id="IPR047001">
    <property type="entry name" value="MnmG_C_subdom"/>
</dbReference>
<dbReference type="InterPro" id="IPR044920">
    <property type="entry name" value="MnmG_C_subdom_sf"/>
</dbReference>
<dbReference type="InterPro" id="IPR040131">
    <property type="entry name" value="MnmG_N"/>
</dbReference>
<dbReference type="NCBIfam" id="TIGR00136">
    <property type="entry name" value="mnmG_gidA"/>
    <property type="match status" value="1"/>
</dbReference>
<dbReference type="PANTHER" id="PTHR11806">
    <property type="entry name" value="GLUCOSE INHIBITED DIVISION PROTEIN A"/>
    <property type="match status" value="1"/>
</dbReference>
<dbReference type="PANTHER" id="PTHR11806:SF0">
    <property type="entry name" value="PROTEIN MTO1 HOMOLOG, MITOCHONDRIAL"/>
    <property type="match status" value="1"/>
</dbReference>
<dbReference type="Pfam" id="PF01134">
    <property type="entry name" value="GIDA"/>
    <property type="match status" value="1"/>
</dbReference>
<dbReference type="Pfam" id="PF21680">
    <property type="entry name" value="GIDA_C_1st"/>
    <property type="match status" value="1"/>
</dbReference>
<dbReference type="Pfam" id="PF13932">
    <property type="entry name" value="SAM_GIDA_C"/>
    <property type="match status" value="1"/>
</dbReference>
<dbReference type="SMART" id="SM01228">
    <property type="entry name" value="GIDA_assoc_3"/>
    <property type="match status" value="1"/>
</dbReference>
<dbReference type="SUPFAM" id="SSF51905">
    <property type="entry name" value="FAD/NAD(P)-binding domain"/>
    <property type="match status" value="1"/>
</dbReference>
<dbReference type="PROSITE" id="PS01280">
    <property type="entry name" value="GIDA_1"/>
    <property type="match status" value="1"/>
</dbReference>
<dbReference type="PROSITE" id="PS01281">
    <property type="entry name" value="GIDA_2"/>
    <property type="match status" value="1"/>
</dbReference>
<organism>
    <name type="scientific">Salmonella heidelberg (strain SL476)</name>
    <dbReference type="NCBI Taxonomy" id="454169"/>
    <lineage>
        <taxon>Bacteria</taxon>
        <taxon>Pseudomonadati</taxon>
        <taxon>Pseudomonadota</taxon>
        <taxon>Gammaproteobacteria</taxon>
        <taxon>Enterobacterales</taxon>
        <taxon>Enterobacteriaceae</taxon>
        <taxon>Salmonella</taxon>
    </lineage>
</organism>
<accession>B4TAY3</accession>
<protein>
    <recommendedName>
        <fullName evidence="1">tRNA uridine 5-carboxymethylaminomethyl modification enzyme MnmG</fullName>
    </recommendedName>
    <alternativeName>
        <fullName evidence="1">Glucose-inhibited division protein A</fullName>
    </alternativeName>
</protein>
<comment type="function">
    <text evidence="1">NAD-binding protein involved in the addition of a carboxymethylaminomethyl (cmnm) group at the wobble position (U34) of certain tRNAs, forming tRNA-cmnm(5)s(2)U34.</text>
</comment>
<comment type="cofactor">
    <cofactor evidence="1">
        <name>FAD</name>
        <dbReference type="ChEBI" id="CHEBI:57692"/>
    </cofactor>
</comment>
<comment type="subunit">
    <text evidence="1">Homodimer. Heterotetramer of two MnmE and two MnmG subunits.</text>
</comment>
<comment type="subcellular location">
    <subcellularLocation>
        <location evidence="1">Cytoplasm</location>
    </subcellularLocation>
</comment>
<comment type="similarity">
    <text evidence="1">Belongs to the MnmG family.</text>
</comment>
<reference key="1">
    <citation type="journal article" date="2011" name="J. Bacteriol.">
        <title>Comparative genomics of 28 Salmonella enterica isolates: evidence for CRISPR-mediated adaptive sublineage evolution.</title>
        <authorList>
            <person name="Fricke W.F."/>
            <person name="Mammel M.K."/>
            <person name="McDermott P.F."/>
            <person name="Tartera C."/>
            <person name="White D.G."/>
            <person name="Leclerc J.E."/>
            <person name="Ravel J."/>
            <person name="Cebula T.A."/>
        </authorList>
    </citation>
    <scope>NUCLEOTIDE SEQUENCE [LARGE SCALE GENOMIC DNA]</scope>
    <source>
        <strain>SL476</strain>
    </source>
</reference>
<gene>
    <name evidence="1" type="primary">mnmG</name>
    <name evidence="1" type="synonym">gidA</name>
    <name type="ordered locus">SeHA_C4207</name>
</gene>
<name>MNMG_SALHS</name>